<gene>
    <name evidence="1" type="primary">rplX</name>
    <name type="ordered locus">BBta_5059</name>
</gene>
<comment type="function">
    <text evidence="1">One of two assembly initiator proteins, it binds directly to the 5'-end of the 23S rRNA, where it nucleates assembly of the 50S subunit.</text>
</comment>
<comment type="function">
    <text evidence="1">One of the proteins that surrounds the polypeptide exit tunnel on the outside of the subunit.</text>
</comment>
<comment type="subunit">
    <text evidence="1">Part of the 50S ribosomal subunit.</text>
</comment>
<comment type="similarity">
    <text evidence="1">Belongs to the universal ribosomal protein uL24 family.</text>
</comment>
<keyword id="KW-1185">Reference proteome</keyword>
<keyword id="KW-0687">Ribonucleoprotein</keyword>
<keyword id="KW-0689">Ribosomal protein</keyword>
<keyword id="KW-0694">RNA-binding</keyword>
<keyword id="KW-0699">rRNA-binding</keyword>
<reference key="1">
    <citation type="journal article" date="2007" name="Science">
        <title>Legumes symbioses: absence of nod genes in photosynthetic bradyrhizobia.</title>
        <authorList>
            <person name="Giraud E."/>
            <person name="Moulin L."/>
            <person name="Vallenet D."/>
            <person name="Barbe V."/>
            <person name="Cytryn E."/>
            <person name="Avarre J.-C."/>
            <person name="Jaubert M."/>
            <person name="Simon D."/>
            <person name="Cartieaux F."/>
            <person name="Prin Y."/>
            <person name="Bena G."/>
            <person name="Hannibal L."/>
            <person name="Fardoux J."/>
            <person name="Kojadinovic M."/>
            <person name="Vuillet L."/>
            <person name="Lajus A."/>
            <person name="Cruveiller S."/>
            <person name="Rouy Z."/>
            <person name="Mangenot S."/>
            <person name="Segurens B."/>
            <person name="Dossat C."/>
            <person name="Franck W.L."/>
            <person name="Chang W.-S."/>
            <person name="Saunders E."/>
            <person name="Bruce D."/>
            <person name="Richardson P."/>
            <person name="Normand P."/>
            <person name="Dreyfus B."/>
            <person name="Pignol D."/>
            <person name="Stacey G."/>
            <person name="Emerich D."/>
            <person name="Vermeglio A."/>
            <person name="Medigue C."/>
            <person name="Sadowsky M."/>
        </authorList>
    </citation>
    <scope>NUCLEOTIDE SEQUENCE [LARGE SCALE GENOMIC DNA]</scope>
    <source>
        <strain>BTAi1 / ATCC BAA-1182</strain>
    </source>
</reference>
<feature type="chain" id="PRO_1000052186" description="Large ribosomal subunit protein uL24">
    <location>
        <begin position="1"/>
        <end position="104"/>
    </location>
</feature>
<dbReference type="EMBL" id="CP000494">
    <property type="protein sequence ID" value="ABQ37060.1"/>
    <property type="molecule type" value="Genomic_DNA"/>
</dbReference>
<dbReference type="RefSeq" id="WP_012045040.1">
    <property type="nucleotide sequence ID" value="NC_009485.1"/>
</dbReference>
<dbReference type="SMR" id="A5ELL6"/>
<dbReference type="STRING" id="288000.BBta_5059"/>
<dbReference type="KEGG" id="bbt:BBta_5059"/>
<dbReference type="eggNOG" id="COG0198">
    <property type="taxonomic scope" value="Bacteria"/>
</dbReference>
<dbReference type="HOGENOM" id="CLU_093315_2_2_5"/>
<dbReference type="OrthoDB" id="9807419at2"/>
<dbReference type="Proteomes" id="UP000000246">
    <property type="component" value="Chromosome"/>
</dbReference>
<dbReference type="GO" id="GO:1990904">
    <property type="term" value="C:ribonucleoprotein complex"/>
    <property type="evidence" value="ECO:0007669"/>
    <property type="project" value="UniProtKB-KW"/>
</dbReference>
<dbReference type="GO" id="GO:0005840">
    <property type="term" value="C:ribosome"/>
    <property type="evidence" value="ECO:0007669"/>
    <property type="project" value="UniProtKB-KW"/>
</dbReference>
<dbReference type="GO" id="GO:0019843">
    <property type="term" value="F:rRNA binding"/>
    <property type="evidence" value="ECO:0007669"/>
    <property type="project" value="UniProtKB-UniRule"/>
</dbReference>
<dbReference type="GO" id="GO:0003735">
    <property type="term" value="F:structural constituent of ribosome"/>
    <property type="evidence" value="ECO:0007669"/>
    <property type="project" value="InterPro"/>
</dbReference>
<dbReference type="GO" id="GO:0006412">
    <property type="term" value="P:translation"/>
    <property type="evidence" value="ECO:0007669"/>
    <property type="project" value="UniProtKB-UniRule"/>
</dbReference>
<dbReference type="CDD" id="cd06089">
    <property type="entry name" value="KOW_RPL26"/>
    <property type="match status" value="1"/>
</dbReference>
<dbReference type="FunFam" id="2.30.30.30:FF:000004">
    <property type="entry name" value="50S ribosomal protein L24"/>
    <property type="match status" value="1"/>
</dbReference>
<dbReference type="Gene3D" id="2.30.30.30">
    <property type="match status" value="1"/>
</dbReference>
<dbReference type="HAMAP" id="MF_01326_B">
    <property type="entry name" value="Ribosomal_uL24_B"/>
    <property type="match status" value="1"/>
</dbReference>
<dbReference type="InterPro" id="IPR005824">
    <property type="entry name" value="KOW"/>
</dbReference>
<dbReference type="InterPro" id="IPR014722">
    <property type="entry name" value="Rib_uL2_dom2"/>
</dbReference>
<dbReference type="InterPro" id="IPR003256">
    <property type="entry name" value="Ribosomal_uL24"/>
</dbReference>
<dbReference type="InterPro" id="IPR005825">
    <property type="entry name" value="Ribosomal_uL24_CS"/>
</dbReference>
<dbReference type="InterPro" id="IPR041988">
    <property type="entry name" value="Ribosomal_uL24_KOW"/>
</dbReference>
<dbReference type="InterPro" id="IPR008991">
    <property type="entry name" value="Translation_prot_SH3-like_sf"/>
</dbReference>
<dbReference type="NCBIfam" id="TIGR01079">
    <property type="entry name" value="rplX_bact"/>
    <property type="match status" value="1"/>
</dbReference>
<dbReference type="PANTHER" id="PTHR12903">
    <property type="entry name" value="MITOCHONDRIAL RIBOSOMAL PROTEIN L24"/>
    <property type="match status" value="1"/>
</dbReference>
<dbReference type="Pfam" id="PF00467">
    <property type="entry name" value="KOW"/>
    <property type="match status" value="1"/>
</dbReference>
<dbReference type="Pfam" id="PF17136">
    <property type="entry name" value="ribosomal_L24"/>
    <property type="match status" value="1"/>
</dbReference>
<dbReference type="SMART" id="SM00739">
    <property type="entry name" value="KOW"/>
    <property type="match status" value="1"/>
</dbReference>
<dbReference type="SUPFAM" id="SSF50104">
    <property type="entry name" value="Translation proteins SH3-like domain"/>
    <property type="match status" value="1"/>
</dbReference>
<dbReference type="PROSITE" id="PS01108">
    <property type="entry name" value="RIBOSOMAL_L24"/>
    <property type="match status" value="1"/>
</dbReference>
<proteinExistence type="inferred from homology"/>
<accession>A5ELL6</accession>
<protein>
    <recommendedName>
        <fullName evidence="1">Large ribosomal subunit protein uL24</fullName>
    </recommendedName>
    <alternativeName>
        <fullName evidence="2">50S ribosomal protein L24</fullName>
    </alternativeName>
</protein>
<organism>
    <name type="scientific">Bradyrhizobium sp. (strain BTAi1 / ATCC BAA-1182)</name>
    <dbReference type="NCBI Taxonomy" id="288000"/>
    <lineage>
        <taxon>Bacteria</taxon>
        <taxon>Pseudomonadati</taxon>
        <taxon>Pseudomonadota</taxon>
        <taxon>Alphaproteobacteria</taxon>
        <taxon>Hyphomicrobiales</taxon>
        <taxon>Nitrobacteraceae</taxon>
        <taxon>Bradyrhizobium</taxon>
    </lineage>
</organism>
<name>RL24_BRASB</name>
<evidence type="ECO:0000255" key="1">
    <source>
        <dbReference type="HAMAP-Rule" id="MF_01326"/>
    </source>
</evidence>
<evidence type="ECO:0000305" key="2"/>
<sequence length="104" mass="11190">MAAKIRKGDKVIVLTGRDKGRTGEVFEVRPDAGTALVRGINLVKRHQKQTQNQEGGIITKEAPIHLSNVAYVGKDGKPTRIGFKVQADGKKVRVAKSSGVEIDG</sequence>